<keyword id="KW-0002">3D-structure</keyword>
<keyword id="KW-0229">DNA integration</keyword>
<keyword id="KW-0233">DNA recombination</keyword>
<keyword id="KW-0238">DNA-binding</keyword>
<keyword id="KW-0378">Hydrolase</keyword>
<keyword id="KW-1185">Reference proteome</keyword>
<keyword id="KW-0808">Transferase</keyword>
<keyword id="KW-1179">Viral genome integration</keyword>
<keyword id="KW-1160">Virus entry into host cell</keyword>
<organism>
    <name type="scientific">Escherichia phage P2</name>
    <name type="common">Bacteriophage P2</name>
    <dbReference type="NCBI Taxonomy" id="2905681"/>
    <lineage>
        <taxon>Viruses</taxon>
        <taxon>Duplodnaviria</taxon>
        <taxon>Heunggongvirae</taxon>
        <taxon>Uroviricota</taxon>
        <taxon>Caudoviricetes</taxon>
        <taxon>Peduoviridae</taxon>
        <taxon>Peduovirus</taxon>
        <taxon>Peduovirus P2</taxon>
    </lineage>
</organism>
<reference key="1">
    <citation type="journal article" date="1989" name="Gene">
        <title>Control of prophage integration and excision in bacteriophage P2: nucleotide sequences of the int gene and att sites.</title>
        <authorList>
            <person name="Yu A."/>
            <person name="Bertani E.L."/>
            <person name="Haggaard-Ljungquist E."/>
        </authorList>
    </citation>
    <scope>NUCLEOTIDE SEQUENCE [GENOMIC DNA]</scope>
</reference>
<reference key="2">
    <citation type="submission" date="1998-05" db="EMBL/GenBank/DDBJ databases">
        <title>The complete genome of bacteriophage P2.</title>
        <authorList>
            <person name="Christie G.E."/>
            <person name="Haggard-Ljungquist E."/>
            <person name="Calendar R."/>
        </authorList>
    </citation>
    <scope>SEQUENCE REVISION TO 246 AND 255</scope>
</reference>
<reference key="3">
    <citation type="journal article" date="2008" name="J. Appl. Microbiol.">
        <title>Bacteriophage P2 integrase: another possible tool for site-specific recombination in eukaryotic cells.</title>
        <authorList>
            <person name="Frumerie C."/>
            <person name="Sylwan L."/>
            <person name="Helleday T."/>
            <person name="Yu A."/>
            <person name="Haggaard-Ljungquist E."/>
        </authorList>
    </citation>
    <scope>FUNCTION</scope>
</reference>
<reference key="4">
    <citation type="journal article" date="2010" name="Virology">
        <title>Identification of bases required for P2 integrase core binding and recombination.</title>
        <authorList>
            <person name="Sylwan L."/>
            <person name="Frumerie C."/>
            <person name="Haggaard-Ljungquist E."/>
        </authorList>
    </citation>
    <scope>FUNCTION</scope>
</reference>
<feature type="chain" id="PRO_0000197506" description="Integrase">
    <location>
        <begin position="1"/>
        <end position="337"/>
    </location>
</feature>
<feature type="domain" description="Core-binding (CB)" evidence="2">
    <location>
        <begin position="59"/>
        <end position="138"/>
    </location>
</feature>
<feature type="domain" description="Tyr recombinase" evidence="1">
    <location>
        <begin position="160"/>
        <end position="317"/>
    </location>
</feature>
<feature type="active site" evidence="1">
    <location>
        <position position="194"/>
    </location>
</feature>
<feature type="active site" evidence="1">
    <location>
        <position position="217"/>
    </location>
</feature>
<feature type="active site" evidence="1">
    <location>
        <position position="269"/>
    </location>
</feature>
<feature type="active site" evidence="1">
    <location>
        <position position="272"/>
    </location>
</feature>
<feature type="active site" evidence="1">
    <location>
        <position position="295"/>
    </location>
</feature>
<feature type="active site" description="O-(3'-phospho-DNA)-tyrosine intermediate" evidence="1">
    <location>
        <position position="304"/>
    </location>
</feature>
<feature type="helix" evidence="7">
    <location>
        <begin position="167"/>
        <end position="176"/>
    </location>
</feature>
<feature type="helix" evidence="7">
    <location>
        <begin position="179"/>
        <end position="191"/>
    </location>
</feature>
<feature type="helix" evidence="7">
    <location>
        <begin position="195"/>
        <end position="199"/>
    </location>
</feature>
<feature type="helix" evidence="7">
    <location>
        <begin position="203"/>
        <end position="205"/>
    </location>
</feature>
<feature type="strand" evidence="7">
    <location>
        <begin position="210"/>
        <end position="213"/>
    </location>
</feature>
<feature type="strand" evidence="7">
    <location>
        <begin position="217"/>
        <end position="219"/>
    </location>
</feature>
<feature type="strand" evidence="7">
    <location>
        <begin position="222"/>
        <end position="225"/>
    </location>
</feature>
<feature type="helix" evidence="7">
    <location>
        <begin position="228"/>
        <end position="234"/>
    </location>
</feature>
<feature type="strand" evidence="7">
    <location>
        <begin position="238"/>
        <end position="242"/>
    </location>
</feature>
<feature type="helix" evidence="7">
    <location>
        <begin position="248"/>
        <end position="258"/>
    </location>
</feature>
<feature type="helix" evidence="7">
    <location>
        <begin position="266"/>
        <end position="268"/>
    </location>
</feature>
<feature type="helix" evidence="7">
    <location>
        <begin position="270"/>
        <end position="281"/>
    </location>
</feature>
<feature type="helix" evidence="7">
    <location>
        <begin position="286"/>
        <end position="293"/>
    </location>
</feature>
<feature type="helix" evidence="7">
    <location>
        <begin position="298"/>
        <end position="301"/>
    </location>
</feature>
<feature type="helix" evidence="7">
    <location>
        <begin position="302"/>
        <end position="307"/>
    </location>
</feature>
<feature type="helix" evidence="7">
    <location>
        <begin position="314"/>
        <end position="318"/>
    </location>
</feature>
<feature type="turn" evidence="7">
    <location>
        <begin position="320"/>
        <end position="323"/>
    </location>
</feature>
<feature type="strand" evidence="8">
    <location>
        <begin position="324"/>
        <end position="326"/>
    </location>
</feature>
<proteinExistence type="evidence at protein level"/>
<dbReference type="EC" id="2.7.7.-" evidence="6"/>
<dbReference type="EC" id="3.1.-.-" evidence="6"/>
<dbReference type="EMBL" id="AF063097">
    <property type="protein sequence ID" value="AAD03297.1"/>
    <property type="molecule type" value="Genomic_DNA"/>
</dbReference>
<dbReference type="RefSeq" id="NP_046786.1">
    <property type="nucleotide sequence ID" value="NC_001895.1"/>
</dbReference>
<dbReference type="PDB" id="5C6K">
    <property type="method" value="X-ray"/>
    <property type="resolution" value="1.90 A"/>
    <property type="chains" value="A/B=46-337"/>
</dbReference>
<dbReference type="PDB" id="5DOR">
    <property type="method" value="X-ray"/>
    <property type="resolution" value="2.50 A"/>
    <property type="chains" value="A/B/C/D=162-337"/>
</dbReference>
<dbReference type="PDBsum" id="5C6K"/>
<dbReference type="PDBsum" id="5DOR"/>
<dbReference type="SMR" id="P36932"/>
<dbReference type="MINT" id="P36932"/>
<dbReference type="GeneID" id="77440805"/>
<dbReference type="KEGG" id="vg:77440805"/>
<dbReference type="Proteomes" id="UP000009092">
    <property type="component" value="Genome"/>
</dbReference>
<dbReference type="GO" id="GO:0003677">
    <property type="term" value="F:DNA binding"/>
    <property type="evidence" value="ECO:0007669"/>
    <property type="project" value="UniProtKB-KW"/>
</dbReference>
<dbReference type="GO" id="GO:0016787">
    <property type="term" value="F:hydrolase activity"/>
    <property type="evidence" value="ECO:0007669"/>
    <property type="project" value="UniProtKB-KW"/>
</dbReference>
<dbReference type="GO" id="GO:0016740">
    <property type="term" value="F:transferase activity"/>
    <property type="evidence" value="ECO:0007669"/>
    <property type="project" value="UniProtKB-KW"/>
</dbReference>
<dbReference type="GO" id="GO:0015074">
    <property type="term" value="P:DNA integration"/>
    <property type="evidence" value="ECO:0007669"/>
    <property type="project" value="UniProtKB-KW"/>
</dbReference>
<dbReference type="GO" id="GO:0006310">
    <property type="term" value="P:DNA recombination"/>
    <property type="evidence" value="ECO:0007669"/>
    <property type="project" value="UniProtKB-KW"/>
</dbReference>
<dbReference type="GO" id="GO:0075713">
    <property type="term" value="P:establishment of integrated proviral latency"/>
    <property type="evidence" value="ECO:0007669"/>
    <property type="project" value="UniProtKB-KW"/>
</dbReference>
<dbReference type="GO" id="GO:0046718">
    <property type="term" value="P:symbiont entry into host cell"/>
    <property type="evidence" value="ECO:0007669"/>
    <property type="project" value="UniProtKB-KW"/>
</dbReference>
<dbReference type="GO" id="GO:0044826">
    <property type="term" value="P:viral genome integration into host DNA"/>
    <property type="evidence" value="ECO:0007669"/>
    <property type="project" value="UniProtKB-KW"/>
</dbReference>
<dbReference type="CDD" id="cd00796">
    <property type="entry name" value="INT_Rci_Hp1_C"/>
    <property type="match status" value="1"/>
</dbReference>
<dbReference type="DisProt" id="DP00850"/>
<dbReference type="Gene3D" id="1.10.443.10">
    <property type="entry name" value="Intergrase catalytic core"/>
    <property type="match status" value="1"/>
</dbReference>
<dbReference type="InterPro" id="IPR044068">
    <property type="entry name" value="CB"/>
</dbReference>
<dbReference type="InterPro" id="IPR011010">
    <property type="entry name" value="DNA_brk_join_enz"/>
</dbReference>
<dbReference type="InterPro" id="IPR013762">
    <property type="entry name" value="Integrase-like_cat_sf"/>
</dbReference>
<dbReference type="InterPro" id="IPR002104">
    <property type="entry name" value="Integrase_catalytic"/>
</dbReference>
<dbReference type="InterPro" id="IPR050090">
    <property type="entry name" value="Tyrosine_recombinase_XerCD"/>
</dbReference>
<dbReference type="PANTHER" id="PTHR30349:SF93">
    <property type="entry name" value="FELS-2 PROPHAGE PROTEIN"/>
    <property type="match status" value="1"/>
</dbReference>
<dbReference type="PANTHER" id="PTHR30349">
    <property type="entry name" value="PHAGE INTEGRASE-RELATED"/>
    <property type="match status" value="1"/>
</dbReference>
<dbReference type="Pfam" id="PF24624">
    <property type="entry name" value="Int_N"/>
    <property type="match status" value="1"/>
</dbReference>
<dbReference type="Pfam" id="PF00589">
    <property type="entry name" value="Phage_integrase"/>
    <property type="match status" value="1"/>
</dbReference>
<dbReference type="SUPFAM" id="SSF56349">
    <property type="entry name" value="DNA breaking-rejoining enzymes"/>
    <property type="match status" value="1"/>
</dbReference>
<dbReference type="PROSITE" id="PS51900">
    <property type="entry name" value="CB"/>
    <property type="match status" value="1"/>
</dbReference>
<dbReference type="PROSITE" id="PS51898">
    <property type="entry name" value="TYR_RECOMBINASE"/>
    <property type="match status" value="1"/>
</dbReference>
<evidence type="ECO:0000255" key="1">
    <source>
        <dbReference type="PROSITE-ProRule" id="PRU01246"/>
    </source>
</evidence>
<evidence type="ECO:0000255" key="2">
    <source>
        <dbReference type="PROSITE-ProRule" id="PRU01248"/>
    </source>
</evidence>
<evidence type="ECO:0000269" key="3">
    <source>
    </source>
</evidence>
<evidence type="ECO:0000269" key="4">
    <source>
    </source>
</evidence>
<evidence type="ECO:0000305" key="5"/>
<evidence type="ECO:0000305" key="6">
    <source>
    </source>
</evidence>
<evidence type="ECO:0007829" key="7">
    <source>
        <dbReference type="PDB" id="5C6K"/>
    </source>
</evidence>
<evidence type="ECO:0007829" key="8">
    <source>
        <dbReference type="PDB" id="5DOR"/>
    </source>
</evidence>
<protein>
    <recommendedName>
        <fullName>Integrase</fullName>
        <ecNumber evidence="6">2.7.7.-</ecNumber>
        <ecNumber evidence="6">3.1.-.-</ecNumber>
    </recommendedName>
</protein>
<organismHost>
    <name type="scientific">Enterobacteriaceae</name>
    <dbReference type="NCBI Taxonomy" id="543"/>
</organismHost>
<comment type="function">
    <text evidence="3 4">Integrase is necessary for integration of the phage into the host genome by site-specific recombination.</text>
</comment>
<comment type="similarity">
    <text evidence="5">Belongs to the 'phage' integrase family.</text>
</comment>
<accession>P36932</accession>
<sequence length="337" mass="38332">MAIKKLDDGRYEVDIRPTGRNGKRIRRKFDKKSEAVAFEKYTLYNHHNKEWLSKPTDKRRLSELTQIWWDLKGKHEEHGKSNLGKIEIFTKITNDPCAFQITKSLISQYCATRRSQGIKPSSINRDLTCISGMFTALIEAELFFGEHPIRGTKRLKEEKPETGYLTQEEIALLLAALDGDNKKIAILCLSTGARWGEAARLKAENIIHNRVTFVKTKTNKPRTVPISEAVAKMIADNKRGFLFPDADYPRFRRTMKAIKPDLPMGQATHALRHSFATHFMINGGSIITLQRILGHTRIEQTMVYAHFAPEYLQDAISLNPLRGGTEAESVHTVSTVE</sequence>
<name>VINT_BPP2</name>
<gene>
    <name type="primary">int</name>
</gene>